<sequence>GPPYQPLVPR</sequence>
<accession>P86447</accession>
<dbReference type="GO" id="GO:0005576">
    <property type="term" value="C:extracellular region"/>
    <property type="evidence" value="ECO:0007669"/>
    <property type="project" value="UniProtKB-SubCell"/>
</dbReference>
<dbReference type="GO" id="GO:0090729">
    <property type="term" value="F:toxin activity"/>
    <property type="evidence" value="ECO:0007669"/>
    <property type="project" value="UniProtKB-KW"/>
</dbReference>
<dbReference type="GO" id="GO:0097746">
    <property type="term" value="P:blood vessel diameter maintenance"/>
    <property type="evidence" value="ECO:0007669"/>
    <property type="project" value="UniProtKB-KW"/>
</dbReference>
<evidence type="ECO:0000269" key="1">
    <source>
    </source>
</evidence>
<evidence type="ECO:0000303" key="2">
    <source>
    </source>
</evidence>
<evidence type="ECO:0000305" key="3"/>
<comment type="function">
    <text evidence="1">Helokinestatin antagonizes the vasodilatory actions of bradykinin at the B2 bradykinin receptor (BDKRB2) in a dose-dependent manner.</text>
</comment>
<comment type="subcellular location">
    <subcellularLocation>
        <location evidence="1">Secreted</location>
    </subcellularLocation>
</comment>
<comment type="tissue specificity">
    <text evidence="1">Expressed by the venom gland.</text>
</comment>
<comment type="mass spectrometry"/>
<protein>
    <recommendedName>
        <fullName>Helokinestatin-1</fullName>
    </recommendedName>
    <alternativeName>
        <fullName evidence="2">Helokinestatin</fullName>
    </alternativeName>
</protein>
<name>HKS_HELHO</name>
<keyword id="KW-1222">Bradykinin receptor impairing toxin</keyword>
<keyword id="KW-0903">Direct protein sequencing</keyword>
<keyword id="KW-1213">G-protein coupled receptor impairing toxin</keyword>
<keyword id="KW-0964">Secreted</keyword>
<keyword id="KW-0800">Toxin</keyword>
<keyword id="KW-0838">Vasoactive</keyword>
<feature type="peptide" id="PRO_0000392451" description="Helokinestatin-1">
    <location>
        <begin position="1"/>
        <end position="10"/>
    </location>
</feature>
<feature type="unsure residue" description="L or I" evidence="1">
    <location>
        <position position="7"/>
    </location>
</feature>
<reference evidence="3" key="1">
    <citation type="journal article" date="2008" name="Peptides">
        <title>Helokinestatin: a new bradykinin B2 receptor antagonist decapeptide from lizard venom.</title>
        <authorList>
            <person name="Kwok H.F."/>
            <person name="Chen T."/>
            <person name="O'Rourke M."/>
            <person name="Ivanyi C."/>
            <person name="Hirst D."/>
            <person name="Shaw C."/>
        </authorList>
    </citation>
    <scope>PROTEIN SEQUENCE</scope>
    <scope>FUNCTION</scope>
    <scope>SUBCELLULAR LOCATION</scope>
    <scope>TISSUE SPECIFICITY</scope>
    <scope>MASS SPECTROMETRY</scope>
    <source>
        <tissue evidence="1">Venom</tissue>
    </source>
</reference>
<organism>
    <name type="scientific">Heloderma horridum horridum</name>
    <name type="common">Mexican beaded lizard</name>
    <dbReference type="NCBI Taxonomy" id="8552"/>
    <lineage>
        <taxon>Eukaryota</taxon>
        <taxon>Metazoa</taxon>
        <taxon>Chordata</taxon>
        <taxon>Craniata</taxon>
        <taxon>Vertebrata</taxon>
        <taxon>Euteleostomi</taxon>
        <taxon>Lepidosauria</taxon>
        <taxon>Squamata</taxon>
        <taxon>Bifurcata</taxon>
        <taxon>Unidentata</taxon>
        <taxon>Episquamata</taxon>
        <taxon>Toxicofera</taxon>
        <taxon>Anguimorpha</taxon>
        <taxon>Neoanguimorpha</taxon>
        <taxon>Helodermatidae</taxon>
        <taxon>Heloderma</taxon>
    </lineage>
</organism>
<proteinExistence type="evidence at protein level"/>